<evidence type="ECO:0000255" key="1">
    <source>
        <dbReference type="HAMAP-Rule" id="MF_00425"/>
    </source>
</evidence>
<organism>
    <name type="scientific">Shewanella amazonensis (strain ATCC BAA-1098 / SB2B)</name>
    <dbReference type="NCBI Taxonomy" id="326297"/>
    <lineage>
        <taxon>Bacteria</taxon>
        <taxon>Pseudomonadati</taxon>
        <taxon>Pseudomonadota</taxon>
        <taxon>Gammaproteobacteria</taxon>
        <taxon>Alteromonadales</taxon>
        <taxon>Shewanellaceae</taxon>
        <taxon>Shewanella</taxon>
    </lineage>
</organism>
<name>NQRA_SHEAM</name>
<gene>
    <name evidence="1" type="primary">nqrA</name>
    <name type="ordered locus">Sama_2539</name>
</gene>
<comment type="function">
    <text evidence="1">NQR complex catalyzes the reduction of ubiquinone-1 to ubiquinol by two successive reactions, coupled with the transport of Na(+) ions from the cytoplasm to the periplasm. NqrA to NqrE are probably involved in the second step, the conversion of ubisemiquinone to ubiquinol.</text>
</comment>
<comment type="catalytic activity">
    <reaction evidence="1">
        <text>a ubiquinone + n Na(+)(in) + NADH + H(+) = a ubiquinol + n Na(+)(out) + NAD(+)</text>
        <dbReference type="Rhea" id="RHEA:47748"/>
        <dbReference type="Rhea" id="RHEA-COMP:9565"/>
        <dbReference type="Rhea" id="RHEA-COMP:9566"/>
        <dbReference type="ChEBI" id="CHEBI:15378"/>
        <dbReference type="ChEBI" id="CHEBI:16389"/>
        <dbReference type="ChEBI" id="CHEBI:17976"/>
        <dbReference type="ChEBI" id="CHEBI:29101"/>
        <dbReference type="ChEBI" id="CHEBI:57540"/>
        <dbReference type="ChEBI" id="CHEBI:57945"/>
        <dbReference type="EC" id="7.2.1.1"/>
    </reaction>
</comment>
<comment type="subunit">
    <text evidence="1">Composed of six subunits; NqrA, NqrB, NqrC, NqrD, NqrE and NqrF.</text>
</comment>
<comment type="similarity">
    <text evidence="1">Belongs to the NqrA family.</text>
</comment>
<protein>
    <recommendedName>
        <fullName evidence="1">Na(+)-translocating NADH-quinone reductase subunit A</fullName>
        <shortName evidence="1">Na(+)-NQR subunit A</shortName>
        <shortName evidence="1">Na(+)-translocating NQR subunit A</shortName>
        <ecNumber evidence="1">7.2.1.1</ecNumber>
    </recommendedName>
    <alternativeName>
        <fullName evidence="1">NQR complex subunit A</fullName>
    </alternativeName>
    <alternativeName>
        <fullName evidence="1">NQR-1 subunit A</fullName>
    </alternativeName>
</protein>
<keyword id="KW-0406">Ion transport</keyword>
<keyword id="KW-0520">NAD</keyword>
<keyword id="KW-1185">Reference proteome</keyword>
<keyword id="KW-0915">Sodium</keyword>
<keyword id="KW-0739">Sodium transport</keyword>
<keyword id="KW-1278">Translocase</keyword>
<keyword id="KW-0813">Transport</keyword>
<keyword id="KW-0830">Ubiquinone</keyword>
<feature type="chain" id="PRO_1000060128" description="Na(+)-translocating NADH-quinone reductase subunit A">
    <location>
        <begin position="1"/>
        <end position="444"/>
    </location>
</feature>
<proteinExistence type="inferred from homology"/>
<reference key="1">
    <citation type="submission" date="2006-12" db="EMBL/GenBank/DDBJ databases">
        <title>Complete sequence of Shewanella amazonensis SB2B.</title>
        <authorList>
            <consortium name="US DOE Joint Genome Institute"/>
            <person name="Copeland A."/>
            <person name="Lucas S."/>
            <person name="Lapidus A."/>
            <person name="Barry K."/>
            <person name="Detter J.C."/>
            <person name="Glavina del Rio T."/>
            <person name="Hammon N."/>
            <person name="Israni S."/>
            <person name="Dalin E."/>
            <person name="Tice H."/>
            <person name="Pitluck S."/>
            <person name="Munk A.C."/>
            <person name="Brettin T."/>
            <person name="Bruce D."/>
            <person name="Han C."/>
            <person name="Tapia R."/>
            <person name="Gilna P."/>
            <person name="Schmutz J."/>
            <person name="Larimer F."/>
            <person name="Land M."/>
            <person name="Hauser L."/>
            <person name="Kyrpides N."/>
            <person name="Mikhailova N."/>
            <person name="Fredrickson J."/>
            <person name="Richardson P."/>
        </authorList>
    </citation>
    <scope>NUCLEOTIDE SEQUENCE [LARGE SCALE GENOMIC DNA]</scope>
    <source>
        <strain>ATCC BAA-1098 / SB2B</strain>
    </source>
</reference>
<dbReference type="EC" id="7.2.1.1" evidence="1"/>
<dbReference type="EMBL" id="CP000507">
    <property type="protein sequence ID" value="ABM00742.1"/>
    <property type="molecule type" value="Genomic_DNA"/>
</dbReference>
<dbReference type="RefSeq" id="WP_011760648.1">
    <property type="nucleotide sequence ID" value="NC_008700.1"/>
</dbReference>
<dbReference type="SMR" id="A1S8N5"/>
<dbReference type="STRING" id="326297.Sama_2539"/>
<dbReference type="KEGG" id="saz:Sama_2539"/>
<dbReference type="eggNOG" id="COG1726">
    <property type="taxonomic scope" value="Bacteria"/>
</dbReference>
<dbReference type="HOGENOM" id="CLU_046656_0_0_6"/>
<dbReference type="OrthoDB" id="9774536at2"/>
<dbReference type="Proteomes" id="UP000009175">
    <property type="component" value="Chromosome"/>
</dbReference>
<dbReference type="GO" id="GO:0016655">
    <property type="term" value="F:oxidoreductase activity, acting on NAD(P)H, quinone or similar compound as acceptor"/>
    <property type="evidence" value="ECO:0007669"/>
    <property type="project" value="UniProtKB-UniRule"/>
</dbReference>
<dbReference type="GO" id="GO:0006814">
    <property type="term" value="P:sodium ion transport"/>
    <property type="evidence" value="ECO:0007669"/>
    <property type="project" value="UniProtKB-UniRule"/>
</dbReference>
<dbReference type="HAMAP" id="MF_00425">
    <property type="entry name" value="NqrA"/>
    <property type="match status" value="1"/>
</dbReference>
<dbReference type="InterPro" id="IPR008703">
    <property type="entry name" value="NqrA"/>
</dbReference>
<dbReference type="InterPro" id="IPR056148">
    <property type="entry name" value="NQRA_2nd"/>
</dbReference>
<dbReference type="InterPro" id="IPR022615">
    <property type="entry name" value="NqrA_C_domain"/>
</dbReference>
<dbReference type="InterPro" id="IPR056147">
    <property type="entry name" value="NQRA_N"/>
</dbReference>
<dbReference type="NCBIfam" id="TIGR01936">
    <property type="entry name" value="nqrA"/>
    <property type="match status" value="1"/>
</dbReference>
<dbReference type="NCBIfam" id="NF003759">
    <property type="entry name" value="PRK05352.1-2"/>
    <property type="match status" value="1"/>
</dbReference>
<dbReference type="NCBIfam" id="NF003762">
    <property type="entry name" value="PRK05352.1-5"/>
    <property type="match status" value="1"/>
</dbReference>
<dbReference type="PANTHER" id="PTHR37839">
    <property type="entry name" value="NA(+)-TRANSLOCATING NADH-QUINONE REDUCTASE SUBUNIT A"/>
    <property type="match status" value="1"/>
</dbReference>
<dbReference type="PANTHER" id="PTHR37839:SF1">
    <property type="entry name" value="NA(+)-TRANSLOCATING NADH-QUINONE REDUCTASE SUBUNIT A"/>
    <property type="match status" value="1"/>
</dbReference>
<dbReference type="Pfam" id="PF24836">
    <property type="entry name" value="NQRA_2nd"/>
    <property type="match status" value="1"/>
</dbReference>
<dbReference type="Pfam" id="PF05896">
    <property type="entry name" value="NQRA_N"/>
    <property type="match status" value="1"/>
</dbReference>
<dbReference type="Pfam" id="PF11973">
    <property type="entry name" value="NQRA_SLBB"/>
    <property type="match status" value="1"/>
</dbReference>
<accession>A1S8N5</accession>
<sequence length="444" mass="47569">MITIKKGLDLPIAGGPEQVIHDGPAIKHVATLGEEYIGMRPTMRIKVGDKVAKGQVIFEDKKNPGVKYTALASGTVTEINRGAKRVLQSVVIEIEGNDAVAFDKFDASQLDSLSAEQVRNNLIESGMWTALRTRPFSKVPAVDASPAGIFVTAIDTNPHAANPALVIAGHKDDFANGLKVLAKLTEGKVYLCKAPGADIPAANAEVHEFGGVHPAGLPGTHIHFILPASVTRTVWHVGYQDVIAIGQLFTTGELNNNRVIAIAGPKAVKPRLVRTLLGASIETLTTGEVAEGKVRKVSGSVLHGRTATGPHAYLGRYHLQVSLLEEDTEKEFIGWILPGSNKFSITRAFLGHLSPRRLFNMTTSTGGSDRAMVPIGNYERVMPLDILPTMLLRDLVSGDVDGAVALGALELDEEDLALCTFVCPGKYDYGSYLRGCLDTVEREG</sequence>